<feature type="chain" id="PRO_0000197004" description="Potassium-transporting ATPase KdpC subunit">
    <location>
        <begin position="1"/>
        <end position="204"/>
    </location>
</feature>
<feature type="transmembrane region" description="Helical" evidence="1">
    <location>
        <begin position="21"/>
        <end position="41"/>
    </location>
</feature>
<proteinExistence type="inferred from homology"/>
<sequence length="204" mass="20754">MATTTQPAHAEAPQQGGLLRAALVIFVGLSLVTGVLYPVVVTGIGKAAFPAQAGGSIIERGGKPVGSALIGQNFSEPQYFWGRLSATSPNPYNGAASSGSNLGPSNPALTDAAKARIAALKEADPANTAPIPVDLVTASASGLDPHISPAAAAYQVERVARARHLPVERVKTLVAEHTTAPILGVFGEPVVNVLELNLGLGDLK</sequence>
<accession>Q8XU10</accession>
<evidence type="ECO:0000255" key="1">
    <source>
        <dbReference type="HAMAP-Rule" id="MF_00276"/>
    </source>
</evidence>
<gene>
    <name evidence="1" type="primary">kdpC</name>
    <name type="ordered locus">RSc3384</name>
    <name type="ORF">RS02658</name>
</gene>
<keyword id="KW-0067">ATP-binding</keyword>
<keyword id="KW-0997">Cell inner membrane</keyword>
<keyword id="KW-1003">Cell membrane</keyword>
<keyword id="KW-0406">Ion transport</keyword>
<keyword id="KW-0472">Membrane</keyword>
<keyword id="KW-0547">Nucleotide-binding</keyword>
<keyword id="KW-0630">Potassium</keyword>
<keyword id="KW-0633">Potassium transport</keyword>
<keyword id="KW-1185">Reference proteome</keyword>
<keyword id="KW-0812">Transmembrane</keyword>
<keyword id="KW-1133">Transmembrane helix</keyword>
<keyword id="KW-0813">Transport</keyword>
<organism>
    <name type="scientific">Ralstonia nicotianae (strain ATCC BAA-1114 / GMI1000)</name>
    <name type="common">Ralstonia solanacearum</name>
    <dbReference type="NCBI Taxonomy" id="267608"/>
    <lineage>
        <taxon>Bacteria</taxon>
        <taxon>Pseudomonadati</taxon>
        <taxon>Pseudomonadota</taxon>
        <taxon>Betaproteobacteria</taxon>
        <taxon>Burkholderiales</taxon>
        <taxon>Burkholderiaceae</taxon>
        <taxon>Ralstonia</taxon>
        <taxon>Ralstonia solanacearum species complex</taxon>
    </lineage>
</organism>
<protein>
    <recommendedName>
        <fullName evidence="1">Potassium-transporting ATPase KdpC subunit</fullName>
    </recommendedName>
    <alternativeName>
        <fullName evidence="1">ATP phosphohydrolase [potassium-transporting] C chain</fullName>
    </alternativeName>
    <alternativeName>
        <fullName evidence="1">Potassium-binding and translocating subunit C</fullName>
    </alternativeName>
    <alternativeName>
        <fullName evidence="1">Potassium-translocating ATPase C chain</fullName>
    </alternativeName>
</protein>
<name>KDPC_RALN1</name>
<dbReference type="EMBL" id="AL646052">
    <property type="protein sequence ID" value="CAD16881.1"/>
    <property type="molecule type" value="Genomic_DNA"/>
</dbReference>
<dbReference type="RefSeq" id="WP_011003265.1">
    <property type="nucleotide sequence ID" value="NC_003295.1"/>
</dbReference>
<dbReference type="SMR" id="Q8XU10"/>
<dbReference type="STRING" id="267608.RSc3384"/>
<dbReference type="EnsemblBacteria" id="CAD16881">
    <property type="protein sequence ID" value="CAD16881"/>
    <property type="gene ID" value="RSc3384"/>
</dbReference>
<dbReference type="KEGG" id="rso:RSc3384"/>
<dbReference type="PATRIC" id="fig|267608.8.peg.3436"/>
<dbReference type="eggNOG" id="COG2156">
    <property type="taxonomic scope" value="Bacteria"/>
</dbReference>
<dbReference type="HOGENOM" id="CLU_077094_2_0_4"/>
<dbReference type="Proteomes" id="UP000001436">
    <property type="component" value="Chromosome"/>
</dbReference>
<dbReference type="GO" id="GO:0005886">
    <property type="term" value="C:plasma membrane"/>
    <property type="evidence" value="ECO:0007669"/>
    <property type="project" value="UniProtKB-SubCell"/>
</dbReference>
<dbReference type="GO" id="GO:0005524">
    <property type="term" value="F:ATP binding"/>
    <property type="evidence" value="ECO:0007669"/>
    <property type="project" value="UniProtKB-UniRule"/>
</dbReference>
<dbReference type="GO" id="GO:0008556">
    <property type="term" value="F:P-type potassium transmembrane transporter activity"/>
    <property type="evidence" value="ECO:0007669"/>
    <property type="project" value="InterPro"/>
</dbReference>
<dbReference type="HAMAP" id="MF_00276">
    <property type="entry name" value="KdpC"/>
    <property type="match status" value="1"/>
</dbReference>
<dbReference type="InterPro" id="IPR003820">
    <property type="entry name" value="KdpC"/>
</dbReference>
<dbReference type="NCBIfam" id="TIGR00681">
    <property type="entry name" value="kdpC"/>
    <property type="match status" value="1"/>
</dbReference>
<dbReference type="NCBIfam" id="NF001454">
    <property type="entry name" value="PRK00315.1"/>
    <property type="match status" value="1"/>
</dbReference>
<dbReference type="PANTHER" id="PTHR30042">
    <property type="entry name" value="POTASSIUM-TRANSPORTING ATPASE C CHAIN"/>
    <property type="match status" value="1"/>
</dbReference>
<dbReference type="PANTHER" id="PTHR30042:SF2">
    <property type="entry name" value="POTASSIUM-TRANSPORTING ATPASE KDPC SUBUNIT"/>
    <property type="match status" value="1"/>
</dbReference>
<dbReference type="Pfam" id="PF02669">
    <property type="entry name" value="KdpC"/>
    <property type="match status" value="1"/>
</dbReference>
<dbReference type="PIRSF" id="PIRSF001296">
    <property type="entry name" value="K_ATPase_KdpC"/>
    <property type="match status" value="1"/>
</dbReference>
<reference key="1">
    <citation type="journal article" date="2002" name="Nature">
        <title>Genome sequence of the plant pathogen Ralstonia solanacearum.</title>
        <authorList>
            <person name="Salanoubat M."/>
            <person name="Genin S."/>
            <person name="Artiguenave F."/>
            <person name="Gouzy J."/>
            <person name="Mangenot S."/>
            <person name="Arlat M."/>
            <person name="Billault A."/>
            <person name="Brottier P."/>
            <person name="Camus J.-C."/>
            <person name="Cattolico L."/>
            <person name="Chandler M."/>
            <person name="Choisne N."/>
            <person name="Claudel-Renard C."/>
            <person name="Cunnac S."/>
            <person name="Demange N."/>
            <person name="Gaspin C."/>
            <person name="Lavie M."/>
            <person name="Moisan A."/>
            <person name="Robert C."/>
            <person name="Saurin W."/>
            <person name="Schiex T."/>
            <person name="Siguier P."/>
            <person name="Thebault P."/>
            <person name="Whalen M."/>
            <person name="Wincker P."/>
            <person name="Levy M."/>
            <person name="Weissenbach J."/>
            <person name="Boucher C.A."/>
        </authorList>
    </citation>
    <scope>NUCLEOTIDE SEQUENCE [LARGE SCALE GENOMIC DNA]</scope>
    <source>
        <strain>ATCC BAA-1114 / GMI1000</strain>
    </source>
</reference>
<comment type="function">
    <text evidence="1">Part of the high-affinity ATP-driven potassium transport (or Kdp) system, which catalyzes the hydrolysis of ATP coupled with the electrogenic transport of potassium into the cytoplasm. This subunit acts as a catalytic chaperone that increases the ATP-binding affinity of the ATP-hydrolyzing subunit KdpB by the formation of a transient KdpB/KdpC/ATP ternary complex.</text>
</comment>
<comment type="subunit">
    <text evidence="1">The system is composed of three essential subunits: KdpA, KdpB and KdpC.</text>
</comment>
<comment type="subcellular location">
    <subcellularLocation>
        <location evidence="1">Cell inner membrane</location>
        <topology evidence="1">Single-pass membrane protein</topology>
    </subcellularLocation>
</comment>
<comment type="similarity">
    <text evidence="1">Belongs to the KdpC family.</text>
</comment>